<reference key="1">
    <citation type="journal article" date="1998" name="Science">
        <title>Complete genome sequence of Treponema pallidum, the syphilis spirochete.</title>
        <authorList>
            <person name="Fraser C.M."/>
            <person name="Norris S.J."/>
            <person name="Weinstock G.M."/>
            <person name="White O."/>
            <person name="Sutton G.G."/>
            <person name="Dodson R.J."/>
            <person name="Gwinn M.L."/>
            <person name="Hickey E.K."/>
            <person name="Clayton R.A."/>
            <person name="Ketchum K.A."/>
            <person name="Sodergren E."/>
            <person name="Hardham J.M."/>
            <person name="McLeod M.P."/>
            <person name="Salzberg S.L."/>
            <person name="Peterson J.D."/>
            <person name="Khalak H.G."/>
            <person name="Richardson D.L."/>
            <person name="Howell J.K."/>
            <person name="Chidambaram M."/>
            <person name="Utterback T.R."/>
            <person name="McDonald L.A."/>
            <person name="Artiach P."/>
            <person name="Bowman C."/>
            <person name="Cotton M.D."/>
            <person name="Fujii C."/>
            <person name="Garland S.A."/>
            <person name="Hatch B."/>
            <person name="Horst K."/>
            <person name="Roberts K.M."/>
            <person name="Sandusky M."/>
            <person name="Weidman J.F."/>
            <person name="Smith H.O."/>
            <person name="Venter J.C."/>
        </authorList>
    </citation>
    <scope>NUCLEOTIDE SEQUENCE [LARGE SCALE GENOMIC DNA]</scope>
    <source>
        <strain>Nichols</strain>
    </source>
</reference>
<name>RL34_TREPA</name>
<sequence>MKRTYQPSRRKRVRKFGFRARMATRGGRAILRRRRAKGRRKLTVSDEKKPY</sequence>
<proteinExistence type="inferred from homology"/>
<comment type="similarity">
    <text evidence="1">Belongs to the bacterial ribosomal protein bL34 family.</text>
</comment>
<organism>
    <name type="scientific">Treponema pallidum (strain Nichols)</name>
    <dbReference type="NCBI Taxonomy" id="243276"/>
    <lineage>
        <taxon>Bacteria</taxon>
        <taxon>Pseudomonadati</taxon>
        <taxon>Spirochaetota</taxon>
        <taxon>Spirochaetia</taxon>
        <taxon>Spirochaetales</taxon>
        <taxon>Treponemataceae</taxon>
        <taxon>Treponema</taxon>
    </lineage>
</organism>
<accession>O83917</accession>
<evidence type="ECO:0000305" key="1"/>
<dbReference type="EMBL" id="AE000520">
    <property type="protein sequence ID" value="AAC65910.1"/>
    <property type="molecule type" value="Genomic_DNA"/>
</dbReference>
<dbReference type="PIR" id="E71261">
    <property type="entry name" value="E71261"/>
</dbReference>
<dbReference type="RefSeq" id="WP_010882395.1">
    <property type="nucleotide sequence ID" value="NC_021490.2"/>
</dbReference>
<dbReference type="SMR" id="O83917"/>
<dbReference type="STRING" id="243276.TP_0951"/>
<dbReference type="EnsemblBacteria" id="AAC65910">
    <property type="protein sequence ID" value="AAC65910"/>
    <property type="gene ID" value="TP_0951"/>
</dbReference>
<dbReference type="GeneID" id="93876809"/>
<dbReference type="KEGG" id="tpa:TP_0951"/>
<dbReference type="KEGG" id="tpw:TPANIC_0951"/>
<dbReference type="eggNOG" id="COG0230">
    <property type="taxonomic scope" value="Bacteria"/>
</dbReference>
<dbReference type="HOGENOM" id="CLU_129938_2_0_12"/>
<dbReference type="Proteomes" id="UP000000811">
    <property type="component" value="Chromosome"/>
</dbReference>
<dbReference type="GO" id="GO:1990904">
    <property type="term" value="C:ribonucleoprotein complex"/>
    <property type="evidence" value="ECO:0007669"/>
    <property type="project" value="UniProtKB-KW"/>
</dbReference>
<dbReference type="GO" id="GO:0005840">
    <property type="term" value="C:ribosome"/>
    <property type="evidence" value="ECO:0007669"/>
    <property type="project" value="UniProtKB-KW"/>
</dbReference>
<dbReference type="GO" id="GO:0003735">
    <property type="term" value="F:structural constituent of ribosome"/>
    <property type="evidence" value="ECO:0007669"/>
    <property type="project" value="InterPro"/>
</dbReference>
<dbReference type="GO" id="GO:0006412">
    <property type="term" value="P:translation"/>
    <property type="evidence" value="ECO:0007669"/>
    <property type="project" value="UniProtKB-UniRule"/>
</dbReference>
<dbReference type="FunFam" id="1.10.287.3980:FF:000001">
    <property type="entry name" value="Mitochondrial ribosomal protein L34"/>
    <property type="match status" value="1"/>
</dbReference>
<dbReference type="Gene3D" id="1.10.287.3980">
    <property type="match status" value="1"/>
</dbReference>
<dbReference type="HAMAP" id="MF_00391">
    <property type="entry name" value="Ribosomal_bL34"/>
    <property type="match status" value="1"/>
</dbReference>
<dbReference type="InterPro" id="IPR000271">
    <property type="entry name" value="Ribosomal_bL34"/>
</dbReference>
<dbReference type="InterPro" id="IPR020939">
    <property type="entry name" value="Ribosomal_bL34_CS"/>
</dbReference>
<dbReference type="NCBIfam" id="TIGR01030">
    <property type="entry name" value="rpmH_bact"/>
    <property type="match status" value="1"/>
</dbReference>
<dbReference type="PANTHER" id="PTHR14503:SF4">
    <property type="entry name" value="LARGE RIBOSOMAL SUBUNIT PROTEIN BL34M"/>
    <property type="match status" value="1"/>
</dbReference>
<dbReference type="PANTHER" id="PTHR14503">
    <property type="entry name" value="MITOCHONDRIAL RIBOSOMAL PROTEIN 34 FAMILY MEMBER"/>
    <property type="match status" value="1"/>
</dbReference>
<dbReference type="Pfam" id="PF00468">
    <property type="entry name" value="Ribosomal_L34"/>
    <property type="match status" value="1"/>
</dbReference>
<dbReference type="PROSITE" id="PS00784">
    <property type="entry name" value="RIBOSOMAL_L34"/>
    <property type="match status" value="1"/>
</dbReference>
<gene>
    <name type="primary">rpmH</name>
    <name type="ordered locus">TP_0951</name>
</gene>
<feature type="chain" id="PRO_0000187496" description="Large ribosomal subunit protein bL34">
    <location>
        <begin position="1"/>
        <end position="51"/>
    </location>
</feature>
<protein>
    <recommendedName>
        <fullName evidence="1">Large ribosomal subunit protein bL34</fullName>
    </recommendedName>
    <alternativeName>
        <fullName>50S ribosomal protein L34</fullName>
    </alternativeName>
</protein>
<keyword id="KW-1185">Reference proteome</keyword>
<keyword id="KW-0687">Ribonucleoprotein</keyword>
<keyword id="KW-0689">Ribosomal protein</keyword>